<comment type="function">
    <text evidence="1">Catalytic subunit of DNA primase, an RNA polymerase that catalyzes the synthesis of short RNA molecules used as primers for DNA polymerase during DNA replication. The small subunit contains the primase catalytic core and has DNA synthesis activity on its own. Binding to the large subunit stabilizes and modulates the activity, increasing the rate of DNA synthesis while decreasing the length of the DNA fragments, and conferring RNA synthesis capability. The DNA polymerase activity may enable DNA primase to also catalyze primer extension after primer synthesis. May also play a role in DNA repair.</text>
</comment>
<comment type="cofactor">
    <cofactor evidence="1">
        <name>Mg(2+)</name>
        <dbReference type="ChEBI" id="CHEBI:18420"/>
    </cofactor>
    <cofactor evidence="1">
        <name>Mn(2+)</name>
        <dbReference type="ChEBI" id="CHEBI:29035"/>
    </cofactor>
</comment>
<comment type="subunit">
    <text evidence="1">Heterodimer of a small subunit (PriS) and a large subunit (PriL).</text>
</comment>
<comment type="similarity">
    <text evidence="1">Belongs to the eukaryotic-type primase small subunit family.</text>
</comment>
<accession>C6A5C2</accession>
<reference key="1">
    <citation type="journal article" date="2009" name="Appl. Environ. Microbiol.">
        <title>Metabolic versatility and indigenous origin of the archaeon Thermococcus sibiricus, isolated from a siberian oil reservoir, as revealed by genome analysis.</title>
        <authorList>
            <person name="Mardanov A.V."/>
            <person name="Ravin N.V."/>
            <person name="Svetlitchnyi V.A."/>
            <person name="Beletsky A.V."/>
            <person name="Miroshnichenko M.L."/>
            <person name="Bonch-Osmolovskaya E.A."/>
            <person name="Skryabin K.G."/>
        </authorList>
    </citation>
    <scope>NUCLEOTIDE SEQUENCE [LARGE SCALE GENOMIC DNA]</scope>
    <source>
        <strain>DSM 12597 / MM 739</strain>
    </source>
</reference>
<sequence>MSELFKEMTKEERKIYYLKEWNVKKIPSFITKTLENREFGFDHTGEGPNDRKNVFHHIKDLEDYVKITAPYSIYSSVALYEEPKNMEGWLGAELVFDIDAKDLPLKRCNHETGKVCPICLDDAKELTKDTLLILREDFGFENIHLIYSGRGYHIRVLDDWALGLDSKAREKILSYISSAEEITFEDLQERKILLSSGYYRVFRLRFGYFIKRVSEYHLRNIGLNKRQIEQIIDGRDEIYENFVKKAMISAFSQGVGYKTLLRLFSLSTTFSKAYFDGRVTVDVKRILRVPSSLHSKVGLVATYIGNDEKDLEKFNPFKDAVPKFREKEVKEAYDLWKETMEE</sequence>
<dbReference type="EC" id="2.7.7.-" evidence="1"/>
<dbReference type="EMBL" id="CP001463">
    <property type="protein sequence ID" value="ACS90817.1"/>
    <property type="molecule type" value="Genomic_DNA"/>
</dbReference>
<dbReference type="RefSeq" id="WP_015850033.1">
    <property type="nucleotide sequence ID" value="NC_012883.1"/>
</dbReference>
<dbReference type="SMR" id="C6A5C2"/>
<dbReference type="STRING" id="604354.TSIB_1766"/>
<dbReference type="GeneID" id="8096776"/>
<dbReference type="KEGG" id="tsi:TSIB_1766"/>
<dbReference type="eggNOG" id="arCOG04110">
    <property type="taxonomic scope" value="Archaea"/>
</dbReference>
<dbReference type="HOGENOM" id="CLU_056123_1_0_2"/>
<dbReference type="OrthoDB" id="31125at2157"/>
<dbReference type="Proteomes" id="UP000009079">
    <property type="component" value="Chromosome"/>
</dbReference>
<dbReference type="GO" id="GO:0000428">
    <property type="term" value="C:DNA-directed RNA polymerase complex"/>
    <property type="evidence" value="ECO:0007669"/>
    <property type="project" value="UniProtKB-KW"/>
</dbReference>
<dbReference type="GO" id="GO:1990077">
    <property type="term" value="C:primosome complex"/>
    <property type="evidence" value="ECO:0007669"/>
    <property type="project" value="UniProtKB-KW"/>
</dbReference>
<dbReference type="GO" id="GO:0003899">
    <property type="term" value="F:DNA-directed RNA polymerase activity"/>
    <property type="evidence" value="ECO:0007669"/>
    <property type="project" value="InterPro"/>
</dbReference>
<dbReference type="GO" id="GO:0046872">
    <property type="term" value="F:metal ion binding"/>
    <property type="evidence" value="ECO:0007669"/>
    <property type="project" value="UniProtKB-KW"/>
</dbReference>
<dbReference type="GO" id="GO:0006269">
    <property type="term" value="P:DNA replication, synthesis of primer"/>
    <property type="evidence" value="ECO:0007669"/>
    <property type="project" value="UniProtKB-UniRule"/>
</dbReference>
<dbReference type="CDD" id="cd04860">
    <property type="entry name" value="AE_Prim_S"/>
    <property type="match status" value="1"/>
</dbReference>
<dbReference type="Gene3D" id="1.10.8.160">
    <property type="entry name" value="DNA primase S, domain 2"/>
    <property type="match status" value="1"/>
</dbReference>
<dbReference type="Gene3D" id="3.90.920.10">
    <property type="entry name" value="DNA primase, PRIM domain"/>
    <property type="match status" value="1"/>
</dbReference>
<dbReference type="HAMAP" id="MF_00700">
    <property type="entry name" value="DNA_primase_sml_arc"/>
    <property type="match status" value="1"/>
</dbReference>
<dbReference type="InterPro" id="IPR002755">
    <property type="entry name" value="DNA_primase_S"/>
</dbReference>
<dbReference type="InterPro" id="IPR014052">
    <property type="entry name" value="DNA_primase_ssu_euk/arc"/>
</dbReference>
<dbReference type="InterPro" id="IPR023639">
    <property type="entry name" value="DNA_primase_ssu_PriS"/>
</dbReference>
<dbReference type="NCBIfam" id="TIGR00335">
    <property type="entry name" value="primase_sml"/>
    <property type="match status" value="1"/>
</dbReference>
<dbReference type="PANTHER" id="PTHR10536">
    <property type="entry name" value="DNA PRIMASE SMALL SUBUNIT"/>
    <property type="match status" value="1"/>
</dbReference>
<dbReference type="Pfam" id="PF01896">
    <property type="entry name" value="DNA_primase_S"/>
    <property type="match status" value="1"/>
</dbReference>
<dbReference type="SUPFAM" id="SSF56747">
    <property type="entry name" value="Prim-pol domain"/>
    <property type="match status" value="1"/>
</dbReference>
<proteinExistence type="inferred from homology"/>
<keyword id="KW-0235">DNA replication</keyword>
<keyword id="KW-0240">DNA-directed RNA polymerase</keyword>
<keyword id="KW-0460">Magnesium</keyword>
<keyword id="KW-0464">Manganese</keyword>
<keyword id="KW-0479">Metal-binding</keyword>
<keyword id="KW-0548">Nucleotidyltransferase</keyword>
<keyword id="KW-0639">Primosome</keyword>
<keyword id="KW-1185">Reference proteome</keyword>
<keyword id="KW-0804">Transcription</keyword>
<keyword id="KW-0808">Transferase</keyword>
<name>PRIS_THESM</name>
<evidence type="ECO:0000255" key="1">
    <source>
        <dbReference type="HAMAP-Rule" id="MF_00700"/>
    </source>
</evidence>
<gene>
    <name evidence="1" type="primary">priS</name>
    <name type="synonym">priA</name>
    <name type="ordered locus">TSIB_1766</name>
</gene>
<protein>
    <recommendedName>
        <fullName evidence="1">DNA primase small subunit PriS</fullName>
        <ecNumber evidence="1">2.7.7.-</ecNumber>
    </recommendedName>
</protein>
<feature type="chain" id="PRO_1000212642" description="DNA primase small subunit PriS">
    <location>
        <begin position="1"/>
        <end position="342"/>
    </location>
</feature>
<feature type="active site" evidence="1">
    <location>
        <position position="97"/>
    </location>
</feature>
<feature type="active site" evidence="1">
    <location>
        <position position="99"/>
    </location>
</feature>
<feature type="active site" evidence="1">
    <location>
        <position position="276"/>
    </location>
</feature>
<organism>
    <name type="scientific">Thermococcus sibiricus (strain DSM 12597 / MM 739)</name>
    <dbReference type="NCBI Taxonomy" id="604354"/>
    <lineage>
        <taxon>Archaea</taxon>
        <taxon>Methanobacteriati</taxon>
        <taxon>Methanobacteriota</taxon>
        <taxon>Thermococci</taxon>
        <taxon>Thermococcales</taxon>
        <taxon>Thermococcaceae</taxon>
        <taxon>Thermococcus</taxon>
    </lineage>
</organism>